<gene>
    <name type="ordered locus">At1g55000</name>
    <name type="ORF">F14C21.53</name>
    <name type="ORF">T24C10.11</name>
</gene>
<reference key="1">
    <citation type="journal article" date="2000" name="Nature">
        <title>Sequence and analysis of chromosome 1 of the plant Arabidopsis thaliana.</title>
        <authorList>
            <person name="Theologis A."/>
            <person name="Ecker J.R."/>
            <person name="Palm C.J."/>
            <person name="Federspiel N.A."/>
            <person name="Kaul S."/>
            <person name="White O."/>
            <person name="Alonso J."/>
            <person name="Altafi H."/>
            <person name="Araujo R."/>
            <person name="Bowman C.L."/>
            <person name="Brooks S.Y."/>
            <person name="Buehler E."/>
            <person name="Chan A."/>
            <person name="Chao Q."/>
            <person name="Chen H."/>
            <person name="Cheuk R.F."/>
            <person name="Chin C.W."/>
            <person name="Chung M.K."/>
            <person name="Conn L."/>
            <person name="Conway A.B."/>
            <person name="Conway A.R."/>
            <person name="Creasy T.H."/>
            <person name="Dewar K."/>
            <person name="Dunn P."/>
            <person name="Etgu P."/>
            <person name="Feldblyum T.V."/>
            <person name="Feng J.-D."/>
            <person name="Fong B."/>
            <person name="Fujii C.Y."/>
            <person name="Gill J.E."/>
            <person name="Goldsmith A.D."/>
            <person name="Haas B."/>
            <person name="Hansen N.F."/>
            <person name="Hughes B."/>
            <person name="Huizar L."/>
            <person name="Hunter J.L."/>
            <person name="Jenkins J."/>
            <person name="Johnson-Hopson C."/>
            <person name="Khan S."/>
            <person name="Khaykin E."/>
            <person name="Kim C.J."/>
            <person name="Koo H.L."/>
            <person name="Kremenetskaia I."/>
            <person name="Kurtz D.B."/>
            <person name="Kwan A."/>
            <person name="Lam B."/>
            <person name="Langin-Hooper S."/>
            <person name="Lee A."/>
            <person name="Lee J.M."/>
            <person name="Lenz C.A."/>
            <person name="Li J.H."/>
            <person name="Li Y.-P."/>
            <person name="Lin X."/>
            <person name="Liu S.X."/>
            <person name="Liu Z.A."/>
            <person name="Luros J.S."/>
            <person name="Maiti R."/>
            <person name="Marziali A."/>
            <person name="Militscher J."/>
            <person name="Miranda M."/>
            <person name="Nguyen M."/>
            <person name="Nierman W.C."/>
            <person name="Osborne B.I."/>
            <person name="Pai G."/>
            <person name="Peterson J."/>
            <person name="Pham P.K."/>
            <person name="Rizzo M."/>
            <person name="Rooney T."/>
            <person name="Rowley D."/>
            <person name="Sakano H."/>
            <person name="Salzberg S.L."/>
            <person name="Schwartz J.R."/>
            <person name="Shinn P."/>
            <person name="Southwick A.M."/>
            <person name="Sun H."/>
            <person name="Tallon L.J."/>
            <person name="Tambunga G."/>
            <person name="Toriumi M.J."/>
            <person name="Town C.D."/>
            <person name="Utterback T."/>
            <person name="Van Aken S."/>
            <person name="Vaysberg M."/>
            <person name="Vysotskaia V.S."/>
            <person name="Walker M."/>
            <person name="Wu D."/>
            <person name="Yu G."/>
            <person name="Fraser C.M."/>
            <person name="Venter J.C."/>
            <person name="Davis R.W."/>
        </authorList>
    </citation>
    <scope>NUCLEOTIDE SEQUENCE [LARGE SCALE GENOMIC DNA]</scope>
    <source>
        <strain>cv. Columbia</strain>
    </source>
</reference>
<reference key="2">
    <citation type="journal article" date="2017" name="Plant J.">
        <title>Araport11: a complete reannotation of the Arabidopsis thaliana reference genome.</title>
        <authorList>
            <person name="Cheng C.Y."/>
            <person name="Krishnakumar V."/>
            <person name="Chan A.P."/>
            <person name="Thibaud-Nissen F."/>
            <person name="Schobel S."/>
            <person name="Town C.D."/>
        </authorList>
    </citation>
    <scope>GENOME REANNOTATION</scope>
    <source>
        <strain>cv. Columbia</strain>
    </source>
</reference>
<reference key="3">
    <citation type="journal article" date="2003" name="Science">
        <title>Empirical analysis of transcriptional activity in the Arabidopsis genome.</title>
        <authorList>
            <person name="Yamada K."/>
            <person name="Lim J."/>
            <person name="Dale J.M."/>
            <person name="Chen H."/>
            <person name="Shinn P."/>
            <person name="Palm C.J."/>
            <person name="Southwick A.M."/>
            <person name="Wu H.C."/>
            <person name="Kim C.J."/>
            <person name="Nguyen M."/>
            <person name="Pham P.K."/>
            <person name="Cheuk R.F."/>
            <person name="Karlin-Newmann G."/>
            <person name="Liu S.X."/>
            <person name="Lam B."/>
            <person name="Sakano H."/>
            <person name="Wu T."/>
            <person name="Yu G."/>
            <person name="Miranda M."/>
            <person name="Quach H.L."/>
            <person name="Tripp M."/>
            <person name="Chang C.H."/>
            <person name="Lee J.M."/>
            <person name="Toriumi M.J."/>
            <person name="Chan M.M."/>
            <person name="Tang C.C."/>
            <person name="Onodera C.S."/>
            <person name="Deng J.M."/>
            <person name="Akiyama K."/>
            <person name="Ansari Y."/>
            <person name="Arakawa T."/>
            <person name="Banh J."/>
            <person name="Banno F."/>
            <person name="Bowser L."/>
            <person name="Brooks S.Y."/>
            <person name="Carninci P."/>
            <person name="Chao Q."/>
            <person name="Choy N."/>
            <person name="Enju A."/>
            <person name="Goldsmith A.D."/>
            <person name="Gurjal M."/>
            <person name="Hansen N.F."/>
            <person name="Hayashizaki Y."/>
            <person name="Johnson-Hopson C."/>
            <person name="Hsuan V.W."/>
            <person name="Iida K."/>
            <person name="Karnes M."/>
            <person name="Khan S."/>
            <person name="Koesema E."/>
            <person name="Ishida J."/>
            <person name="Jiang P.X."/>
            <person name="Jones T."/>
            <person name="Kawai J."/>
            <person name="Kamiya A."/>
            <person name="Meyers C."/>
            <person name="Nakajima M."/>
            <person name="Narusaka M."/>
            <person name="Seki M."/>
            <person name="Sakurai T."/>
            <person name="Satou M."/>
            <person name="Tamse R."/>
            <person name="Vaysberg M."/>
            <person name="Wallender E.K."/>
            <person name="Wong C."/>
            <person name="Yamamura Y."/>
            <person name="Yuan S."/>
            <person name="Shinozaki K."/>
            <person name="Davis R.W."/>
            <person name="Theologis A."/>
            <person name="Ecker J.R."/>
        </authorList>
    </citation>
    <scope>NUCLEOTIDE SEQUENCE [LARGE SCALE MRNA]</scope>
    <source>
        <strain>cv. Columbia</strain>
    </source>
</reference>
<reference key="4">
    <citation type="journal article" date="2009" name="DNA Res.">
        <title>Analysis of multiple occurrences of alternative splicing events in Arabidopsis thaliana using novel sequenced full-length cDNAs.</title>
        <authorList>
            <person name="Iida K."/>
            <person name="Fukami-Kobayashi K."/>
            <person name="Toyoda A."/>
            <person name="Sakaki Y."/>
            <person name="Kobayashi M."/>
            <person name="Seki M."/>
            <person name="Shinozaki K."/>
        </authorList>
    </citation>
    <scope>NUCLEOTIDE SEQUENCE [LARGE SCALE MRNA]</scope>
    <source>
        <strain>cv. Columbia</strain>
    </source>
</reference>
<reference key="5">
    <citation type="submission" date="2002-03" db="EMBL/GenBank/DDBJ databases">
        <title>Full-length cDNA from Arabidopsis thaliana.</title>
        <authorList>
            <person name="Brover V.V."/>
            <person name="Troukhan M.E."/>
            <person name="Alexandrov N.A."/>
            <person name="Lu Y.-P."/>
            <person name="Flavell R.B."/>
            <person name="Feldmann K.A."/>
        </authorList>
    </citation>
    <scope>NUCLEOTIDE SEQUENCE [LARGE SCALE MRNA]</scope>
</reference>
<reference key="6">
    <citation type="journal article" date="2002" name="Proc. Natl. Acad. Sci. U.S.A.">
        <title>The F-box subunit of the SCF E3 complex is encoded by a diverse superfamily of genes in Arabidopsis.</title>
        <authorList>
            <person name="Gagne J.M."/>
            <person name="Downes B.P."/>
            <person name="Shiu S.-H."/>
            <person name="Durski A.M."/>
            <person name="Vierstra R.D."/>
        </authorList>
    </citation>
    <scope>INTERACTION WITH SKP1A/ASK1; SKP1B/ASK2; ASK4; ASK11 AND ASK13</scope>
</reference>
<organism>
    <name type="scientific">Arabidopsis thaliana</name>
    <name type="common">Mouse-ear cress</name>
    <dbReference type="NCBI Taxonomy" id="3702"/>
    <lineage>
        <taxon>Eukaryota</taxon>
        <taxon>Viridiplantae</taxon>
        <taxon>Streptophyta</taxon>
        <taxon>Embryophyta</taxon>
        <taxon>Tracheophyta</taxon>
        <taxon>Spermatophyta</taxon>
        <taxon>Magnoliopsida</taxon>
        <taxon>eudicotyledons</taxon>
        <taxon>Gunneridae</taxon>
        <taxon>Pentapetalae</taxon>
        <taxon>rosids</taxon>
        <taxon>malvids</taxon>
        <taxon>Brassicales</taxon>
        <taxon>Brassicaceae</taxon>
        <taxon>Camelineae</taxon>
        <taxon>Arabidopsis</taxon>
    </lineage>
</organism>
<accession>Q9FZ32</accession>
<accession>B9DG23</accession>
<evidence type="ECO:0000250" key="1"/>
<evidence type="ECO:0000255" key="2">
    <source>
        <dbReference type="PROSITE-ProRule" id="PRU01118"/>
    </source>
</evidence>
<evidence type="ECO:0000269" key="3">
    <source>
    </source>
</evidence>
<keyword id="KW-1185">Reference proteome</keyword>
<keyword id="KW-0833">Ubl conjugation pathway</keyword>
<comment type="function">
    <text evidence="1">Component of SCF(ASK-cullin-F-box) E3 ubiquitin ligase complexes, which may mediate the ubiquitination and subsequent proteasomal degradation of target proteins.</text>
</comment>
<comment type="pathway">
    <text>Protein modification; protein ubiquitination.</text>
</comment>
<comment type="subunit">
    <text evidence="1 3">Part of a SCF (ASK-cullin-F-box) protein ligase complex (By similarity). Interacts with SKP1A/ASK1, SKP1B/ASK2, ASK4, ASK11 and ASK13.</text>
</comment>
<comment type="domain">
    <text evidence="1">The F-box is necessary for the interaction with ASK proteins.</text>
</comment>
<proteinExistence type="evidence at protein level"/>
<dbReference type="EMBL" id="AC064840">
    <property type="protein sequence ID" value="AAG00879.1"/>
    <property type="molecule type" value="Genomic_DNA"/>
</dbReference>
<dbReference type="EMBL" id="AC069144">
    <property type="protein sequence ID" value="AAG51120.1"/>
    <property type="molecule type" value="Genomic_DNA"/>
</dbReference>
<dbReference type="EMBL" id="CP002684">
    <property type="protein sequence ID" value="AEE33171.1"/>
    <property type="molecule type" value="Genomic_DNA"/>
</dbReference>
<dbReference type="EMBL" id="CP002684">
    <property type="protein sequence ID" value="AEE33172.1"/>
    <property type="molecule type" value="Genomic_DNA"/>
</dbReference>
<dbReference type="EMBL" id="CP002684">
    <property type="protein sequence ID" value="AEE33173.1"/>
    <property type="molecule type" value="Genomic_DNA"/>
</dbReference>
<dbReference type="EMBL" id="AF424604">
    <property type="protein sequence ID" value="AAL11598.1"/>
    <property type="molecule type" value="mRNA"/>
</dbReference>
<dbReference type="EMBL" id="AY124829">
    <property type="protein sequence ID" value="AAM70538.1"/>
    <property type="molecule type" value="mRNA"/>
</dbReference>
<dbReference type="EMBL" id="AK316995">
    <property type="protein sequence ID" value="BAH19690.1"/>
    <property type="molecule type" value="mRNA"/>
</dbReference>
<dbReference type="EMBL" id="AK317053">
    <property type="protein sequence ID" value="BAH19746.1"/>
    <property type="molecule type" value="mRNA"/>
</dbReference>
<dbReference type="EMBL" id="AY087755">
    <property type="protein sequence ID" value="AAM65291.1"/>
    <property type="molecule type" value="mRNA"/>
</dbReference>
<dbReference type="PIR" id="E96591">
    <property type="entry name" value="E96591"/>
</dbReference>
<dbReference type="RefSeq" id="NP_001031192.1">
    <property type="nucleotide sequence ID" value="NM_001036115.1"/>
</dbReference>
<dbReference type="RefSeq" id="NP_001031193.1">
    <property type="nucleotide sequence ID" value="NM_001036116.2"/>
</dbReference>
<dbReference type="RefSeq" id="NP_564673.1">
    <property type="nucleotide sequence ID" value="NM_104374.3"/>
</dbReference>
<dbReference type="BioGRID" id="27167">
    <property type="interactions" value="4"/>
</dbReference>
<dbReference type="FunCoup" id="Q9FZ32">
    <property type="interactions" value="309"/>
</dbReference>
<dbReference type="IntAct" id="Q9FZ32">
    <property type="interactions" value="5"/>
</dbReference>
<dbReference type="STRING" id="3702.Q9FZ32"/>
<dbReference type="PaxDb" id="3702-AT1G55000.1"/>
<dbReference type="ProteomicsDB" id="222425"/>
<dbReference type="EnsemblPlants" id="AT1G55000.1">
    <property type="protein sequence ID" value="AT1G55000.1"/>
    <property type="gene ID" value="AT1G55000"/>
</dbReference>
<dbReference type="EnsemblPlants" id="AT1G55000.2">
    <property type="protein sequence ID" value="AT1G55000.2"/>
    <property type="gene ID" value="AT1G55000"/>
</dbReference>
<dbReference type="EnsemblPlants" id="AT1G55000.3">
    <property type="protein sequence ID" value="AT1G55000.3"/>
    <property type="gene ID" value="AT1G55000"/>
</dbReference>
<dbReference type="GeneID" id="841942"/>
<dbReference type="Gramene" id="AT1G55000.1">
    <property type="protein sequence ID" value="AT1G55000.1"/>
    <property type="gene ID" value="AT1G55000"/>
</dbReference>
<dbReference type="Gramene" id="AT1G55000.2">
    <property type="protein sequence ID" value="AT1G55000.2"/>
    <property type="gene ID" value="AT1G55000"/>
</dbReference>
<dbReference type="Gramene" id="AT1G55000.3">
    <property type="protein sequence ID" value="AT1G55000.3"/>
    <property type="gene ID" value="AT1G55000"/>
</dbReference>
<dbReference type="KEGG" id="ath:AT1G55000"/>
<dbReference type="Araport" id="AT1G55000"/>
<dbReference type="TAIR" id="AT1G55000"/>
<dbReference type="eggNOG" id="KOG2850">
    <property type="taxonomic scope" value="Eukaryota"/>
</dbReference>
<dbReference type="HOGENOM" id="CLU_071942_0_0_1"/>
<dbReference type="InParanoid" id="Q9FZ32"/>
<dbReference type="OMA" id="TCYVELD"/>
<dbReference type="OrthoDB" id="538216at2759"/>
<dbReference type="PhylomeDB" id="Q9FZ32"/>
<dbReference type="UniPathway" id="UPA00143"/>
<dbReference type="PRO" id="PR:Q9FZ32"/>
<dbReference type="Proteomes" id="UP000006548">
    <property type="component" value="Chromosome 1"/>
</dbReference>
<dbReference type="ExpressionAtlas" id="Q9FZ32">
    <property type="expression patterns" value="baseline and differential"/>
</dbReference>
<dbReference type="GO" id="GO:0016567">
    <property type="term" value="P:protein ubiquitination"/>
    <property type="evidence" value="ECO:0007669"/>
    <property type="project" value="UniProtKB-UniPathway"/>
</dbReference>
<dbReference type="CDD" id="cd09917">
    <property type="entry name" value="F-box_SF"/>
    <property type="match status" value="1"/>
</dbReference>
<dbReference type="CDD" id="cd00118">
    <property type="entry name" value="LysM"/>
    <property type="match status" value="1"/>
</dbReference>
<dbReference type="Gene3D" id="1.20.1280.50">
    <property type="match status" value="1"/>
</dbReference>
<dbReference type="Gene3D" id="3.10.350.10">
    <property type="entry name" value="LysM domain"/>
    <property type="match status" value="1"/>
</dbReference>
<dbReference type="InterPro" id="IPR036047">
    <property type="entry name" value="F-box-like_dom_sf"/>
</dbReference>
<dbReference type="InterPro" id="IPR001810">
    <property type="entry name" value="F-box_dom"/>
</dbReference>
<dbReference type="InterPro" id="IPR045030">
    <property type="entry name" value="LYSM1-4"/>
</dbReference>
<dbReference type="InterPro" id="IPR018392">
    <property type="entry name" value="LysM_dom"/>
</dbReference>
<dbReference type="InterPro" id="IPR036779">
    <property type="entry name" value="LysM_dom_sf"/>
</dbReference>
<dbReference type="PANTHER" id="PTHR20932:SF8">
    <property type="entry name" value="LD22649P"/>
    <property type="match status" value="1"/>
</dbReference>
<dbReference type="PANTHER" id="PTHR20932">
    <property type="entry name" value="LYSM AND PUTATIVE PEPTIDOGLYCAN-BINDING DOMAIN-CONTAINING PROTEIN"/>
    <property type="match status" value="1"/>
</dbReference>
<dbReference type="Pfam" id="PF12937">
    <property type="entry name" value="F-box-like"/>
    <property type="match status" value="1"/>
</dbReference>
<dbReference type="Pfam" id="PF01476">
    <property type="entry name" value="LysM"/>
    <property type="match status" value="1"/>
</dbReference>
<dbReference type="SMART" id="SM00257">
    <property type="entry name" value="LysM"/>
    <property type="match status" value="1"/>
</dbReference>
<dbReference type="SUPFAM" id="SSF81383">
    <property type="entry name" value="F-box domain"/>
    <property type="match status" value="1"/>
</dbReference>
<dbReference type="SUPFAM" id="SSF54106">
    <property type="entry name" value="LysM domain"/>
    <property type="match status" value="1"/>
</dbReference>
<dbReference type="PROSITE" id="PS51782">
    <property type="entry name" value="LYSM"/>
    <property type="match status" value="1"/>
</dbReference>
<protein>
    <recommendedName>
        <fullName>F-box protein At1g55000</fullName>
    </recommendedName>
</protein>
<feature type="chain" id="PRO_0000283334" description="F-box protein At1g55000">
    <location>
        <begin position="1"/>
        <end position="221"/>
    </location>
</feature>
<feature type="domain" description="F-box">
    <location>
        <begin position="7"/>
        <end position="46"/>
    </location>
</feature>
<feature type="domain" description="LysM" evidence="2">
    <location>
        <begin position="74"/>
        <end position="118"/>
    </location>
</feature>
<name>FB60_ARATH</name>
<sequence length="221" mass="24904">MALYCRDTLIIIFQKLTVADLARASCVCKVWNSVATEDDLVVSAFTAPWRIKELVGRPASVSFWRDNGIWKFAISHRICRGDSVTSLAVKYAVQVMDIKRLNNMMSDHGIYSRDRLLIPISNPEILANTTCYVELDKYAKREVAVLYLEGAPKREQPVPGTNQQSNLSADGKRRLIESLRRSMQVDDGTALYYLAIAEGDPRSALSEFSADLRWERQAGLN</sequence>